<organism>
    <name type="scientific">Shigella sonnei (strain Ss046)</name>
    <dbReference type="NCBI Taxonomy" id="300269"/>
    <lineage>
        <taxon>Bacteria</taxon>
        <taxon>Pseudomonadati</taxon>
        <taxon>Pseudomonadota</taxon>
        <taxon>Gammaproteobacteria</taxon>
        <taxon>Enterobacterales</taxon>
        <taxon>Enterobacteriaceae</taxon>
        <taxon>Shigella</taxon>
    </lineage>
</organism>
<feature type="chain" id="PRO_0000268889" description="Regulator of sigma D">
    <location>
        <begin position="1"/>
        <end position="158"/>
    </location>
</feature>
<reference key="1">
    <citation type="journal article" date="2005" name="Nucleic Acids Res.">
        <title>Genome dynamics and diversity of Shigella species, the etiologic agents of bacillary dysentery.</title>
        <authorList>
            <person name="Yang F."/>
            <person name="Yang J."/>
            <person name="Zhang X."/>
            <person name="Chen L."/>
            <person name="Jiang Y."/>
            <person name="Yan Y."/>
            <person name="Tang X."/>
            <person name="Wang J."/>
            <person name="Xiong Z."/>
            <person name="Dong J."/>
            <person name="Xue Y."/>
            <person name="Zhu Y."/>
            <person name="Xu X."/>
            <person name="Sun L."/>
            <person name="Chen S."/>
            <person name="Nie H."/>
            <person name="Peng J."/>
            <person name="Xu J."/>
            <person name="Wang Y."/>
            <person name="Yuan Z."/>
            <person name="Wen Y."/>
            <person name="Yao Z."/>
            <person name="Shen Y."/>
            <person name="Qiang B."/>
            <person name="Hou Y."/>
            <person name="Yu J."/>
            <person name="Jin Q."/>
        </authorList>
    </citation>
    <scope>NUCLEOTIDE SEQUENCE [LARGE SCALE GENOMIC DNA]</scope>
    <source>
        <strain>Ss046</strain>
    </source>
</reference>
<accession>Q3YUY9</accession>
<evidence type="ECO:0000255" key="1">
    <source>
        <dbReference type="HAMAP-Rule" id="MF_01181"/>
    </source>
</evidence>
<dbReference type="EMBL" id="CP000038">
    <property type="protein sequence ID" value="AAZ90673.1"/>
    <property type="molecule type" value="Genomic_DNA"/>
</dbReference>
<dbReference type="RefSeq" id="WP_000934302.1">
    <property type="nucleotide sequence ID" value="NC_007384.1"/>
</dbReference>
<dbReference type="SMR" id="Q3YUY9"/>
<dbReference type="GeneID" id="75205513"/>
<dbReference type="KEGG" id="ssn:SSON_4168"/>
<dbReference type="HOGENOM" id="CLU_142729_0_0_6"/>
<dbReference type="Proteomes" id="UP000002529">
    <property type="component" value="Chromosome"/>
</dbReference>
<dbReference type="GO" id="GO:0005737">
    <property type="term" value="C:cytoplasm"/>
    <property type="evidence" value="ECO:0007669"/>
    <property type="project" value="UniProtKB-SubCell"/>
</dbReference>
<dbReference type="GO" id="GO:0006355">
    <property type="term" value="P:regulation of DNA-templated transcription"/>
    <property type="evidence" value="ECO:0007669"/>
    <property type="project" value="InterPro"/>
</dbReference>
<dbReference type="FunFam" id="1.20.120.1370:FF:000001">
    <property type="entry name" value="Regulator of sigma D"/>
    <property type="match status" value="1"/>
</dbReference>
<dbReference type="Gene3D" id="1.20.120.1370">
    <property type="entry name" value="Regulator of RNA polymerase sigma(70) subunit, domain 4"/>
    <property type="match status" value="1"/>
</dbReference>
<dbReference type="HAMAP" id="MF_01181">
    <property type="entry name" value="Rsd"/>
    <property type="match status" value="1"/>
</dbReference>
<dbReference type="InterPro" id="IPR038309">
    <property type="entry name" value="Rsd/AlgQ_sf"/>
</dbReference>
<dbReference type="InterPro" id="IPR023785">
    <property type="entry name" value="Sigma70_reg_Rsd"/>
</dbReference>
<dbReference type="InterPro" id="IPR007448">
    <property type="entry name" value="Sigma70_reg_Rsd_AlgQ"/>
</dbReference>
<dbReference type="NCBIfam" id="NF008723">
    <property type="entry name" value="PRK11718.1"/>
    <property type="match status" value="1"/>
</dbReference>
<dbReference type="Pfam" id="PF04353">
    <property type="entry name" value="Rsd_AlgQ"/>
    <property type="match status" value="1"/>
</dbReference>
<dbReference type="PIRSF" id="PIRSF016548">
    <property type="entry name" value="Rsd_AlgQ"/>
    <property type="match status" value="1"/>
</dbReference>
<sequence>MLNQLDNLTERVRGSNKLVDRWLHVRKHLLVAYYNLVGIKPGKESYMRLNEKALDDFCQSLVDYLSAGHFSIYERILHKLEGNGQLARAAKIWPQLEANTQQIMDYYDSSLETAIDHDNYLEFQQVLSDIGEALEARFVLEDKLILLVLDAARVKHPA</sequence>
<name>RSD_SHISS</name>
<protein>
    <recommendedName>
        <fullName evidence="1">Regulator of sigma D</fullName>
    </recommendedName>
</protein>
<keyword id="KW-0963">Cytoplasm</keyword>
<keyword id="KW-1185">Reference proteome</keyword>
<keyword id="KW-0804">Transcription</keyword>
<keyword id="KW-0805">Transcription regulation</keyword>
<comment type="function">
    <text evidence="1">Binds RpoD and negatively regulates RpoD-mediated transcription activation by preventing the interaction between the primary sigma factor RpoD with the catalytic core of the RNA polymerase and with promoter DNA. May be involved in replacement of the RNA polymerase sigma subunit from RpoD to RpoS during the transition from exponential growth to the stationary phase.</text>
</comment>
<comment type="subunit">
    <text evidence="1">Interacts with RpoD.</text>
</comment>
<comment type="subcellular location">
    <subcellularLocation>
        <location evidence="1">Cytoplasm</location>
    </subcellularLocation>
</comment>
<comment type="similarity">
    <text evidence="1">Belongs to the Rsd/AlgQ family.</text>
</comment>
<proteinExistence type="inferred from homology"/>
<gene>
    <name evidence="1" type="primary">rsd</name>
    <name type="ordered locus">SSON_4168</name>
</gene>